<name>CD244_RAT</name>
<accession>Q9JLM2</accession>
<accession>Q9JLM3</accession>
<feature type="signal peptide" evidence="5">
    <location>
        <begin position="1"/>
        <end position="19"/>
    </location>
</feature>
<feature type="chain" id="PRO_0000014670" description="Natural killer cell receptor 2B4">
    <location>
        <begin position="20"/>
        <end position="311"/>
    </location>
</feature>
<feature type="topological domain" description="Extracellular" evidence="5">
    <location>
        <begin position="20"/>
        <end position="223"/>
    </location>
</feature>
<feature type="transmembrane region" description="Helical" evidence="5">
    <location>
        <begin position="224"/>
        <end position="247"/>
    </location>
</feature>
<feature type="topological domain" description="Cytoplasmic" evidence="5">
    <location>
        <begin position="248"/>
        <end position="311"/>
    </location>
</feature>
<feature type="domain" description="Ig-like 1">
    <location>
        <begin position="22"/>
        <end position="128"/>
    </location>
</feature>
<feature type="domain" description="Ig-like 2">
    <location>
        <begin position="131"/>
        <end position="215"/>
    </location>
</feature>
<feature type="region of interest" description="Disordered" evidence="6">
    <location>
        <begin position="275"/>
        <end position="301"/>
    </location>
</feature>
<feature type="compositionally biased region" description="Basic and acidic residues" evidence="6">
    <location>
        <begin position="290"/>
        <end position="301"/>
    </location>
</feature>
<feature type="glycosylation site" description="N-linked (GlcNAc...) asparagine" evidence="5">
    <location>
        <position position="101"/>
    </location>
</feature>
<feature type="glycosylation site" description="N-linked (GlcNAc...) asparagine" evidence="5">
    <location>
        <position position="144"/>
    </location>
</feature>
<feature type="glycosylation site" description="N-linked (GlcNAc...) asparagine" evidence="5">
    <location>
        <position position="160"/>
    </location>
</feature>
<feature type="glycosylation site" description="N-linked (GlcNAc...) asparagine" evidence="5">
    <location>
        <position position="183"/>
    </location>
</feature>
<feature type="glycosylation site" description="N-linked (GlcNAc...) asparagine" evidence="5">
    <location>
        <position position="196"/>
    </location>
</feature>
<feature type="glycosylation site" description="N-linked (GlcNAc...) asparagine" evidence="5">
    <location>
        <position position="205"/>
    </location>
</feature>
<feature type="disulfide bond" evidence="1">
    <location>
        <begin position="22"/>
        <end position="118"/>
    </location>
</feature>
<feature type="disulfide bond" evidence="5">
    <location>
        <begin position="153"/>
        <end position="195"/>
    </location>
</feature>
<feature type="sequence conflict" description="In Ref. 1; AAF71161." evidence="7" ref="1">
    <original>A</original>
    <variation>T</variation>
    <location>
        <position position="46"/>
    </location>
</feature>
<feature type="sequence conflict" description="In Ref. 1; AAF71161." evidence="7" ref="1">
    <original>YGTHWENRTDASSLHTYTCNVSNKASWA</original>
    <variation>IQLSALCGIHRYPRQIFSWGHRLLLCVE</variation>
    <location>
        <begin position="177"/>
        <end position="204"/>
    </location>
</feature>
<feature type="sequence conflict" description="In Ref. 1; AAF71161." evidence="7" ref="1">
    <location>
        <begin position="205"/>
        <end position="311"/>
    </location>
</feature>
<organism>
    <name type="scientific">Rattus norvegicus</name>
    <name type="common">Rat</name>
    <dbReference type="NCBI Taxonomy" id="10116"/>
    <lineage>
        <taxon>Eukaryota</taxon>
        <taxon>Metazoa</taxon>
        <taxon>Chordata</taxon>
        <taxon>Craniata</taxon>
        <taxon>Vertebrata</taxon>
        <taxon>Euteleostomi</taxon>
        <taxon>Mammalia</taxon>
        <taxon>Eutheria</taxon>
        <taxon>Euarchontoglires</taxon>
        <taxon>Glires</taxon>
        <taxon>Rodentia</taxon>
        <taxon>Myomorpha</taxon>
        <taxon>Muroidea</taxon>
        <taxon>Muridae</taxon>
        <taxon>Murinae</taxon>
        <taxon>Rattus</taxon>
    </lineage>
</organism>
<reference key="1">
    <citation type="journal article" date="2000" name="Immunogenetics">
        <title>Molecular cloning of transmembrane and soluble forms of a novel rat natural killer cell receptor related to 2B4.</title>
        <authorList>
            <person name="Kumaresan P.R."/>
            <person name="Stepp S.E."/>
            <person name="Bennett M."/>
            <person name="Kumar V."/>
            <person name="Mathew P.A."/>
        </authorList>
    </citation>
    <scope>NUCLEOTIDE SEQUENCE [MRNA]</scope>
</reference>
<proteinExistence type="evidence at transcript level"/>
<sequence>MLQQTVLLSLFLLLRAHQGQDCADSSEEVLGVSGKPVRLRPSNIQAKHVSIEWKKKTGHQQTPQIVTWDTTDNKNFNMCCSDIYGFESENFALSIKSAKLNDSGHYLLEITNQRGIVCTKNFQMLIFDPVETPHLTVQGTLWANGTCQLSLSCFVPKDDNVSYALYRGSMLISNQRYGTHWENRTDASSLHTYTCNVSNKASWANHTLTSPQSCQSVPSKFNYLPFMVSIGILVKFFHGAIDCFCVWNRKRKQSQSIAKESLTIHEYVKNAQVSRDQRGHFRASGSSSDVRGDERGQRESDRRLFQFINRS</sequence>
<evidence type="ECO:0000250" key="1"/>
<evidence type="ECO:0000250" key="2">
    <source>
        <dbReference type="UniProtKB" id="Q07763"/>
    </source>
</evidence>
<evidence type="ECO:0000250" key="3">
    <source>
        <dbReference type="UniProtKB" id="Q13291"/>
    </source>
</evidence>
<evidence type="ECO:0000250" key="4">
    <source>
        <dbReference type="UniProtKB" id="Q9BZW8"/>
    </source>
</evidence>
<evidence type="ECO:0000255" key="5"/>
<evidence type="ECO:0000256" key="6">
    <source>
        <dbReference type="SAM" id="MobiDB-lite"/>
    </source>
</evidence>
<evidence type="ECO:0000305" key="7"/>
<protein>
    <recommendedName>
        <fullName>Natural killer cell receptor 2B4</fullName>
    </recommendedName>
    <alternativeName>
        <fullName>NK cell type I receptor protein 2B4</fullName>
        <shortName>NKR2B4</shortName>
    </alternativeName>
    <alternativeName>
        <fullName>Non-MHC restricted killing associated</fullName>
    </alternativeName>
    <cdAntigenName>CD244</cdAntigenName>
</protein>
<gene>
    <name type="primary">Cd244</name>
    <name type="synonym">2b4</name>
    <name type="synonym">Nmrk</name>
</gene>
<comment type="function">
    <text evidence="2 4">Heterophilic receptor of the signaling lymphocytic activation molecule (SLAM) family; its ligand is CD48. SLAM receptors triggered by homo- or heterotypic cell-cell interactions are modulating the activation and differentiation of a wide variety of immune cells and thus are involved in the regulation and interconnection of both innate and adaptive immune response. Activities are controlled by presence or absence of small cytoplasmic adapter proteins, SH2D1A/SAP and/or SH2D1B/EAT-2. Acts as activating natural killer (NK) cell receptor. Activating function implicates association with SH2D1A and FYN. Downstreaming signaling involves predominantly VAV1, and, to a lesser degree, INPP5D/SHIP1 and CBL. Signal attenuation in the absence of SH2D1A is proposed to be dependent on INPP5D and to a lesser extent PTPN6/SHP-1 and PTPN11/SHP-2. Stimulates NK cell cytotoxicity, production of IFN-gamma and granule exocytosis (By similarity). Optimal expansion and activation of NK cells seems to be dependent on the engagement of CD244 with CD48 expressed on neighboring NK cells (By similarity). Acts as costimulator in NK activation by enhancing signals by other NK receptors such as NCR3 and NCR1. At early stages of NK cell differentiation may function as an inhibitory receptor possibly ensuring the self-tolerance of developing NK cells (By similarity). Involved in the regulation of CD8(+) T-cell proliferation; expression on activated T-cells and binding to CD48 provides costimulatory-like function for neighboring T-cells (By similarity). Inhibits inflammatory responses in dendritic cells (DCs) (By similarity).</text>
</comment>
<comment type="subunit">
    <text evidence="2 4">Interacts with CD48. Interacts (via phosphorylated ITSM 1-4) with SH2D1A (via SH2 domain); SH2D1A probably mediates association with FYN. Interacts (via phosphorylated ITSM 3) with PTPN11/SHP-2, INPP5D/SHIP1, PTPN6/SHP-1 and CSK; binding of SH2D1A/SAP prevents association with PTPN11, PTPN6 and CSK; conflictingly a similar association has been described for phosphorylated ITSM 1 also including GRB2 and PLCG1. Interacts weakly (via phosphorylated ITSM 2) with PTPN11/SHP-2 and CSK. Interacts with SH2D1B. Interacts with PIK3R1; PI3K recruits SH2D1A. Interacts with MHC class I proteins; the interaction is proposed to prevent self-killing of NK cells.</text>
</comment>
<comment type="subcellular location">
    <subcellularLocation>
        <location evidence="4">Membrane</location>
        <topology evidence="4">Single-pass type I membrane protein</topology>
    </subcellularLocation>
    <subcellularLocation>
        <location evidence="4">Cell membrane</location>
    </subcellularLocation>
    <subcellularLocation>
        <location evidence="4">Membrane raft</location>
    </subcellularLocation>
    <text evidence="4">Receptor engagement results in a recruitment to lipid drafts essential for the subsequent tyrosine phosphorylation of the ITSMs.</text>
</comment>
<comment type="domain">
    <text evidence="3 4">The ITSMs (immunoreceptor tyrosine-based switch motifs) with the consensus sequence T-X-Y-X-X-[VI] present in SLAM family receptors have overlapping specificity for activating and inhibitory SH2 domain-containing binding partners. Especially they mediate the interaction with the SH2 domain of SH2D1A and SH2D1B. A 'three-pronged' mechanism is proposed involving threonine (position -2), phosphorylated tyrosine (position 0) and valine/isoleucine (position +3).</text>
</comment>
<comment type="PTM">
    <text evidence="4">N-linked glycosylation is essential for the binding to its ligand CD48. Also O-glycosylated, in contrast, O-linked sialylation has a negative impact on ligand binding.</text>
</comment>
<comment type="PTM">
    <text evidence="4">Phosphorylated by FYN and CSK on tyrosine residues following activation. Coligation with inhibitory receptors such as KIR2DL1 inhibits phosphorylation upon contact of NK cells with sensitive target cells.</text>
</comment>
<keyword id="KW-1003">Cell membrane</keyword>
<keyword id="KW-1015">Disulfide bond</keyword>
<keyword id="KW-0325">Glycoprotein</keyword>
<keyword id="KW-0393">Immunoglobulin domain</keyword>
<keyword id="KW-0472">Membrane</keyword>
<keyword id="KW-0597">Phosphoprotein</keyword>
<keyword id="KW-0675">Receptor</keyword>
<keyword id="KW-1185">Reference proteome</keyword>
<keyword id="KW-0677">Repeat</keyword>
<keyword id="KW-0732">Signal</keyword>
<keyword id="KW-0812">Transmembrane</keyword>
<keyword id="KW-1133">Transmembrane helix</keyword>
<dbReference type="EMBL" id="AF156988">
    <property type="protein sequence ID" value="AAF71161.1"/>
    <property type="molecule type" value="mRNA"/>
</dbReference>
<dbReference type="EMBL" id="AF156989">
    <property type="protein sequence ID" value="AAF71162.1"/>
    <property type="molecule type" value="mRNA"/>
</dbReference>
<dbReference type="RefSeq" id="NP_071595.1">
    <property type="nucleotide sequence ID" value="NM_022259.1"/>
</dbReference>
<dbReference type="SMR" id="Q9JLM2"/>
<dbReference type="FunCoup" id="Q9JLM2">
    <property type="interactions" value="141"/>
</dbReference>
<dbReference type="STRING" id="10116.ENSRNOP00000006266"/>
<dbReference type="GlyCosmos" id="Q9JLM2">
    <property type="glycosylation" value="6 sites, No reported glycans"/>
</dbReference>
<dbReference type="GlyGen" id="Q9JLM2">
    <property type="glycosylation" value="6 sites"/>
</dbReference>
<dbReference type="PhosphoSitePlus" id="Q9JLM2"/>
<dbReference type="PaxDb" id="10116-ENSRNOP00000006266"/>
<dbReference type="GeneID" id="64025"/>
<dbReference type="KEGG" id="rno:64025"/>
<dbReference type="UCSC" id="RGD:68400">
    <property type="organism name" value="rat"/>
</dbReference>
<dbReference type="AGR" id="RGD:68400"/>
<dbReference type="CTD" id="64025"/>
<dbReference type="RGD" id="68400">
    <property type="gene designation" value="Cd244"/>
</dbReference>
<dbReference type="eggNOG" id="ENOG502S7N7">
    <property type="taxonomic scope" value="Eukaryota"/>
</dbReference>
<dbReference type="InParanoid" id="Q9JLM2"/>
<dbReference type="PhylomeDB" id="Q9JLM2"/>
<dbReference type="Reactome" id="R-RNO-202733">
    <property type="pathway name" value="Cell surface interactions at the vascular wall"/>
</dbReference>
<dbReference type="PRO" id="PR:Q9JLM2"/>
<dbReference type="Proteomes" id="UP000002494">
    <property type="component" value="Unplaced"/>
</dbReference>
<dbReference type="GO" id="GO:0009897">
    <property type="term" value="C:external side of plasma membrane"/>
    <property type="evidence" value="ECO:0000318"/>
    <property type="project" value="GO_Central"/>
</dbReference>
<dbReference type="GO" id="GO:0045121">
    <property type="term" value="C:membrane raft"/>
    <property type="evidence" value="ECO:0007669"/>
    <property type="project" value="UniProtKB-SubCell"/>
</dbReference>
<dbReference type="GO" id="GO:0042288">
    <property type="term" value="F:MHC class I protein binding"/>
    <property type="evidence" value="ECO:0000318"/>
    <property type="project" value="GO_Central"/>
</dbReference>
<dbReference type="GO" id="GO:0006955">
    <property type="term" value="P:immune response"/>
    <property type="evidence" value="ECO:0000318"/>
    <property type="project" value="GO_Central"/>
</dbReference>
<dbReference type="GO" id="GO:0002323">
    <property type="term" value="P:natural killer cell activation involved in immune response"/>
    <property type="evidence" value="ECO:0000318"/>
    <property type="project" value="GO_Central"/>
</dbReference>
<dbReference type="Gene3D" id="2.60.40.10">
    <property type="entry name" value="Immunoglobulins"/>
    <property type="match status" value="2"/>
</dbReference>
<dbReference type="InterPro" id="IPR015631">
    <property type="entry name" value="CD2/SLAM_rcpt"/>
</dbReference>
<dbReference type="InterPro" id="IPR036179">
    <property type="entry name" value="Ig-like_dom_sf"/>
</dbReference>
<dbReference type="InterPro" id="IPR013783">
    <property type="entry name" value="Ig-like_fold"/>
</dbReference>
<dbReference type="InterPro" id="IPR024303">
    <property type="entry name" value="NK_rcpt_2B4_Ig_dom"/>
</dbReference>
<dbReference type="PANTHER" id="PTHR12080:SF56">
    <property type="entry name" value="NATURAL KILLER CELL RECEPTOR 2B4"/>
    <property type="match status" value="1"/>
</dbReference>
<dbReference type="PANTHER" id="PTHR12080">
    <property type="entry name" value="SIGNALING LYMPHOCYTIC ACTIVATION MOLECULE"/>
    <property type="match status" value="1"/>
</dbReference>
<dbReference type="Pfam" id="PF11465">
    <property type="entry name" value="Receptor_2B4"/>
    <property type="match status" value="1"/>
</dbReference>
<dbReference type="SUPFAM" id="SSF48726">
    <property type="entry name" value="Immunoglobulin"/>
    <property type="match status" value="1"/>
</dbReference>